<organism>
    <name type="scientific">Methylobacterium sp. (strain 4-46)</name>
    <dbReference type="NCBI Taxonomy" id="426117"/>
    <lineage>
        <taxon>Bacteria</taxon>
        <taxon>Pseudomonadati</taxon>
        <taxon>Pseudomonadota</taxon>
        <taxon>Alphaproteobacteria</taxon>
        <taxon>Hyphomicrobiales</taxon>
        <taxon>Methylobacteriaceae</taxon>
        <taxon>Methylobacterium</taxon>
    </lineage>
</organism>
<dbReference type="EMBL" id="CP000943">
    <property type="protein sequence ID" value="ACA20797.1"/>
    <property type="molecule type" value="Genomic_DNA"/>
</dbReference>
<dbReference type="RefSeq" id="WP_012336173.1">
    <property type="nucleotide sequence ID" value="NC_010511.1"/>
</dbReference>
<dbReference type="SMR" id="B0UC46"/>
<dbReference type="STRING" id="426117.M446_6540"/>
<dbReference type="KEGG" id="met:M446_6540"/>
<dbReference type="eggNOG" id="COG2967">
    <property type="taxonomic scope" value="Bacteria"/>
</dbReference>
<dbReference type="HOGENOM" id="CLU_128074_1_0_5"/>
<dbReference type="GO" id="GO:0070987">
    <property type="term" value="P:error-free translesion synthesis"/>
    <property type="evidence" value="ECO:0007669"/>
    <property type="project" value="TreeGrafter"/>
</dbReference>
<dbReference type="Gene3D" id="2.60.40.1470">
    <property type="entry name" value="ApaG domain"/>
    <property type="match status" value="1"/>
</dbReference>
<dbReference type="HAMAP" id="MF_00791">
    <property type="entry name" value="ApaG"/>
    <property type="match status" value="1"/>
</dbReference>
<dbReference type="InterPro" id="IPR007474">
    <property type="entry name" value="ApaG_domain"/>
</dbReference>
<dbReference type="InterPro" id="IPR036767">
    <property type="entry name" value="ApaG_sf"/>
</dbReference>
<dbReference type="InterPro" id="IPR023065">
    <property type="entry name" value="Uncharacterised_ApaG"/>
</dbReference>
<dbReference type="NCBIfam" id="NF003967">
    <property type="entry name" value="PRK05461.1"/>
    <property type="match status" value="1"/>
</dbReference>
<dbReference type="PANTHER" id="PTHR14289">
    <property type="entry name" value="F-BOX ONLY PROTEIN 3"/>
    <property type="match status" value="1"/>
</dbReference>
<dbReference type="PANTHER" id="PTHR14289:SF16">
    <property type="entry name" value="POLYMERASE DELTA-INTERACTING PROTEIN 2"/>
    <property type="match status" value="1"/>
</dbReference>
<dbReference type="Pfam" id="PF04379">
    <property type="entry name" value="DUF525"/>
    <property type="match status" value="1"/>
</dbReference>
<dbReference type="SUPFAM" id="SSF110069">
    <property type="entry name" value="ApaG-like"/>
    <property type="match status" value="1"/>
</dbReference>
<dbReference type="PROSITE" id="PS51087">
    <property type="entry name" value="APAG"/>
    <property type="match status" value="1"/>
</dbReference>
<name>APAG_METS4</name>
<feature type="chain" id="PRO_1000133798" description="Protein ApaG">
    <location>
        <begin position="1"/>
        <end position="130"/>
    </location>
</feature>
<feature type="domain" description="ApaG" evidence="1">
    <location>
        <begin position="3"/>
        <end position="127"/>
    </location>
</feature>
<reference key="1">
    <citation type="submission" date="2008-02" db="EMBL/GenBank/DDBJ databases">
        <title>Complete sequence of chromosome of Methylobacterium sp. 4-46.</title>
        <authorList>
            <consortium name="US DOE Joint Genome Institute"/>
            <person name="Copeland A."/>
            <person name="Lucas S."/>
            <person name="Lapidus A."/>
            <person name="Glavina del Rio T."/>
            <person name="Dalin E."/>
            <person name="Tice H."/>
            <person name="Bruce D."/>
            <person name="Goodwin L."/>
            <person name="Pitluck S."/>
            <person name="Chertkov O."/>
            <person name="Brettin T."/>
            <person name="Detter J.C."/>
            <person name="Han C."/>
            <person name="Kuske C.R."/>
            <person name="Schmutz J."/>
            <person name="Larimer F."/>
            <person name="Land M."/>
            <person name="Hauser L."/>
            <person name="Kyrpides N."/>
            <person name="Ivanova N."/>
            <person name="Marx C.J."/>
            <person name="Richardson P."/>
        </authorList>
    </citation>
    <scope>NUCLEOTIDE SEQUENCE [LARGE SCALE GENOMIC DNA]</scope>
    <source>
        <strain>4-46</strain>
    </source>
</reference>
<protein>
    <recommendedName>
        <fullName evidence="1">Protein ApaG</fullName>
    </recommendedName>
</protein>
<evidence type="ECO:0000255" key="1">
    <source>
        <dbReference type="HAMAP-Rule" id="MF_00791"/>
    </source>
</evidence>
<accession>B0UC46</accession>
<proteinExistence type="inferred from homology"/>
<sequence>MYKAETRGISVTVTPRFVEEESSPDESRYFFAYTVEITNNGRDKVQLRSRHWRIVDGRGALQEVRGAGVVGKQPVLGPGESFSYTSGCPLPTPNGTMEGTYTMATADGESFEAAIPAFSLDVPHVRRVMH</sequence>
<gene>
    <name evidence="1" type="primary">apaG</name>
    <name type="ordered locus">M446_6540</name>
</gene>